<organism>
    <name type="scientific">Arabidopsis thaliana</name>
    <name type="common">Mouse-ear cress</name>
    <dbReference type="NCBI Taxonomy" id="3702"/>
    <lineage>
        <taxon>Eukaryota</taxon>
        <taxon>Viridiplantae</taxon>
        <taxon>Streptophyta</taxon>
        <taxon>Embryophyta</taxon>
        <taxon>Tracheophyta</taxon>
        <taxon>Spermatophyta</taxon>
        <taxon>Magnoliopsida</taxon>
        <taxon>eudicotyledons</taxon>
        <taxon>Gunneridae</taxon>
        <taxon>Pentapetalae</taxon>
        <taxon>rosids</taxon>
        <taxon>malvids</taxon>
        <taxon>Brassicales</taxon>
        <taxon>Brassicaceae</taxon>
        <taxon>Camelineae</taxon>
        <taxon>Arabidopsis</taxon>
    </lineage>
</organism>
<keyword id="KW-0025">Alternative splicing</keyword>
<keyword id="KW-0067">ATP-binding</keyword>
<keyword id="KW-0175">Coiled coil</keyword>
<keyword id="KW-0472">Membrane</keyword>
<keyword id="KW-0547">Nucleotide-binding</keyword>
<keyword id="KW-1185">Reference proteome</keyword>
<keyword id="KW-0677">Repeat</keyword>
<keyword id="KW-1278">Translocase</keyword>
<keyword id="KW-0812">Transmembrane</keyword>
<keyword id="KW-1133">Transmembrane helix</keyword>
<keyword id="KW-0813">Transport</keyword>
<gene>
    <name type="primary">ABCC5</name>
    <name type="synonym">MRP5</name>
    <name type="ordered locus">At1g04120</name>
    <name type="ORF">F20D22.11</name>
</gene>
<reference key="1">
    <citation type="submission" date="1997-02" db="EMBL/GenBank/DDBJ databases">
        <authorList>
            <person name="Weigmann N."/>
            <person name="Ansorge M."/>
            <person name="Meuller-Roeber B."/>
        </authorList>
    </citation>
    <scope>NUCLEOTIDE SEQUENCE [MRNA]</scope>
    <source>
        <strain>cv. Columbia</strain>
        <tissue>Hypocotyl</tissue>
    </source>
</reference>
<reference key="2">
    <citation type="submission" date="2000-01" db="EMBL/GenBank/DDBJ databases">
        <title>Cloning and characterization of putative sulfonylurea receptor-like gene from Arabidopsis thaliana.</title>
        <authorList>
            <person name="Ko J.-H."/>
            <person name="Kwon M.J."/>
            <person name="Yi H.C."/>
            <person name="Cho M.H."/>
        </authorList>
    </citation>
    <scope>NUCLEOTIDE SEQUENCE [MRNA]</scope>
    <source>
        <strain>cv. Wassilewskija</strain>
    </source>
</reference>
<reference key="3">
    <citation type="journal article" date="2000" name="Nature">
        <title>Sequence and analysis of chromosome 1 of the plant Arabidopsis thaliana.</title>
        <authorList>
            <person name="Theologis A."/>
            <person name="Ecker J.R."/>
            <person name="Palm C.J."/>
            <person name="Federspiel N.A."/>
            <person name="Kaul S."/>
            <person name="White O."/>
            <person name="Alonso J."/>
            <person name="Altafi H."/>
            <person name="Araujo R."/>
            <person name="Bowman C.L."/>
            <person name="Brooks S.Y."/>
            <person name="Buehler E."/>
            <person name="Chan A."/>
            <person name="Chao Q."/>
            <person name="Chen H."/>
            <person name="Cheuk R.F."/>
            <person name="Chin C.W."/>
            <person name="Chung M.K."/>
            <person name="Conn L."/>
            <person name="Conway A.B."/>
            <person name="Conway A.R."/>
            <person name="Creasy T.H."/>
            <person name="Dewar K."/>
            <person name="Dunn P."/>
            <person name="Etgu P."/>
            <person name="Feldblyum T.V."/>
            <person name="Feng J.-D."/>
            <person name="Fong B."/>
            <person name="Fujii C.Y."/>
            <person name="Gill J.E."/>
            <person name="Goldsmith A.D."/>
            <person name="Haas B."/>
            <person name="Hansen N.F."/>
            <person name="Hughes B."/>
            <person name="Huizar L."/>
            <person name="Hunter J.L."/>
            <person name="Jenkins J."/>
            <person name="Johnson-Hopson C."/>
            <person name="Khan S."/>
            <person name="Khaykin E."/>
            <person name="Kim C.J."/>
            <person name="Koo H.L."/>
            <person name="Kremenetskaia I."/>
            <person name="Kurtz D.B."/>
            <person name="Kwan A."/>
            <person name="Lam B."/>
            <person name="Langin-Hooper S."/>
            <person name="Lee A."/>
            <person name="Lee J.M."/>
            <person name="Lenz C.A."/>
            <person name="Li J.H."/>
            <person name="Li Y.-P."/>
            <person name="Lin X."/>
            <person name="Liu S.X."/>
            <person name="Liu Z.A."/>
            <person name="Luros J.S."/>
            <person name="Maiti R."/>
            <person name="Marziali A."/>
            <person name="Militscher J."/>
            <person name="Miranda M."/>
            <person name="Nguyen M."/>
            <person name="Nierman W.C."/>
            <person name="Osborne B.I."/>
            <person name="Pai G."/>
            <person name="Peterson J."/>
            <person name="Pham P.K."/>
            <person name="Rizzo M."/>
            <person name="Rooney T."/>
            <person name="Rowley D."/>
            <person name="Sakano H."/>
            <person name="Salzberg S.L."/>
            <person name="Schwartz J.R."/>
            <person name="Shinn P."/>
            <person name="Southwick A.M."/>
            <person name="Sun H."/>
            <person name="Tallon L.J."/>
            <person name="Tambunga G."/>
            <person name="Toriumi M.J."/>
            <person name="Town C.D."/>
            <person name="Utterback T."/>
            <person name="Van Aken S."/>
            <person name="Vaysberg M."/>
            <person name="Vysotskaia V.S."/>
            <person name="Walker M."/>
            <person name="Wu D."/>
            <person name="Yu G."/>
            <person name="Fraser C.M."/>
            <person name="Venter J.C."/>
            <person name="Davis R.W."/>
        </authorList>
    </citation>
    <scope>NUCLEOTIDE SEQUENCE [LARGE SCALE GENOMIC DNA]</scope>
    <source>
        <strain>cv. Columbia</strain>
    </source>
</reference>
<reference key="4">
    <citation type="journal article" date="2017" name="Plant J.">
        <title>Araport11: a complete reannotation of the Arabidopsis thaliana reference genome.</title>
        <authorList>
            <person name="Cheng C.Y."/>
            <person name="Krishnakumar V."/>
            <person name="Chan A.P."/>
            <person name="Thibaud-Nissen F."/>
            <person name="Schobel S."/>
            <person name="Town C.D."/>
        </authorList>
    </citation>
    <scope>GENOME REANNOTATION</scope>
    <source>
        <strain>cv. Columbia</strain>
    </source>
</reference>
<reference key="5">
    <citation type="submission" date="2005-03" db="EMBL/GenBank/DDBJ databases">
        <title>Large-scale analysis of RIKEN Arabidopsis full-length (RAFL) cDNAs.</title>
        <authorList>
            <person name="Totoki Y."/>
            <person name="Seki M."/>
            <person name="Ishida J."/>
            <person name="Nakajima M."/>
            <person name="Enju A."/>
            <person name="Kamiya A."/>
            <person name="Narusaka M."/>
            <person name="Shin-i T."/>
            <person name="Nakagawa M."/>
            <person name="Sakamoto N."/>
            <person name="Oishi K."/>
            <person name="Kohara Y."/>
            <person name="Kobayashi M."/>
            <person name="Toyoda A."/>
            <person name="Sakaki Y."/>
            <person name="Sakurai T."/>
            <person name="Iida K."/>
            <person name="Akiyama K."/>
            <person name="Satou M."/>
            <person name="Toyoda T."/>
            <person name="Konagaya A."/>
            <person name="Carninci P."/>
            <person name="Kawai J."/>
            <person name="Hayashizaki Y."/>
            <person name="Shinozaki K."/>
        </authorList>
    </citation>
    <scope>NUCLEOTIDE SEQUENCE [LARGE SCALE MRNA] OF 1438-1514</scope>
    <source>
        <strain>cv. Columbia</strain>
    </source>
</reference>
<reference key="6">
    <citation type="journal article" date="2001" name="EMBO J.">
        <title>The Arabidopsis thaliana ABC transporter AtMRP5 controls root development and stomata movement.</title>
        <authorList>
            <person name="Gaedeke N."/>
            <person name="Klein M."/>
            <person name="Kolukisaoglu U.H."/>
            <person name="Forestier C."/>
            <person name="Mueller A."/>
            <person name="Ansorge M."/>
            <person name="Becker D."/>
            <person name="Mamnun Y."/>
            <person name="Kuchler K."/>
            <person name="Schulz B."/>
            <person name="Mueller-Roeber B."/>
            <person name="Martinoia E."/>
        </authorList>
    </citation>
    <scope>FUNCTION</scope>
    <scope>TISSUE SPECIFICITY</scope>
    <scope>DEVELOPMENTAL STAGE</scope>
    <scope>ACTIVITY REGULATION</scope>
</reference>
<reference key="7">
    <citation type="journal article" date="2001" name="J. Biol. Chem.">
        <title>The Arabidopsis thaliana ABC protein superfamily, a complete inventory.</title>
        <authorList>
            <person name="Sanchez-Fernandez R."/>
            <person name="Davies T.G."/>
            <person name="Coleman J.O."/>
            <person name="Rea P.A."/>
        </authorList>
    </citation>
    <scope>GENE FAMILY</scope>
    <scope>NOMENCLATURE</scope>
</reference>
<reference key="8">
    <citation type="journal article" date="2002" name="Planta">
        <title>Multifunctionality of plant ABC transporters -- more than just detoxifiers.</title>
        <authorList>
            <person name="Martinoia E."/>
            <person name="Klein M."/>
            <person name="Geisler M."/>
            <person name="Bovet L."/>
            <person name="Forestier C."/>
            <person name="Kolukisaoglu H.U."/>
            <person name="Mueller-Roeber B."/>
            <person name="Schulz B."/>
        </authorList>
    </citation>
    <scope>FUNCTION</scope>
    <scope>GENE FAMILY</scope>
</reference>
<reference key="9">
    <citation type="journal article" date="2002" name="Planta">
        <title>Family business: the multidrug-resistance related protein (MRP) ABC transporter genes in Arabidopsis thaliana.</title>
        <authorList>
            <person name="Kolukisaoglu U.H."/>
            <person name="Bovet L."/>
            <person name="Klein M."/>
            <person name="Eggmann T."/>
            <person name="Geisler M."/>
            <person name="Wanke D."/>
            <person name="Martinoia E."/>
            <person name="Schulz B."/>
        </authorList>
    </citation>
    <scope>TISSUE SPECIFICITY</scope>
</reference>
<reference key="10">
    <citation type="journal article" date="2003" name="Plant J.">
        <title>The plant multidrug resistance ABC transporter AtMRP5 is involved in guard cell hormonal signalling and water use.</title>
        <authorList>
            <person name="Klein M."/>
            <person name="Perfus-Barbeoch L."/>
            <person name="Frelet A."/>
            <person name="Gaedeke N."/>
            <person name="Reinhardt D."/>
            <person name="Mueller-Roeber B."/>
            <person name="Martinoia E."/>
            <person name="Forestier C."/>
        </authorList>
    </citation>
    <scope>FUNCTION</scope>
    <scope>DISRUPTION PHENOTYPE</scope>
</reference>
<reference key="11">
    <citation type="journal article" date="2004" name="Plant Physiol.">
        <title>Binding of sulfonylurea by AtMRP5, an Arabidopsis multidrug resistance-related protein that functions in salt tolerance.</title>
        <authorList>
            <person name="Lee E.K."/>
            <person name="Kwon M.J."/>
            <person name="Ko J.-H."/>
            <person name="Yi H.C."/>
            <person name="Hwang M.G."/>
            <person name="Chang S."/>
            <person name="Cho M.H."/>
        </authorList>
    </citation>
    <scope>FUNCTION</scope>
    <scope>TISSUE SPECIFICITY</scope>
</reference>
<reference key="12">
    <citation type="journal article" date="2008" name="Trends Plant Sci.">
        <title>Plant ABC proteins - a unified nomenclature and updated inventory.</title>
        <authorList>
            <person name="Verrier P.J."/>
            <person name="Bird D."/>
            <person name="Burla B."/>
            <person name="Dassa E."/>
            <person name="Forestier C."/>
            <person name="Geisler M."/>
            <person name="Klein M."/>
            <person name="Kolukisaoglu H.U."/>
            <person name="Lee Y."/>
            <person name="Martinoia E."/>
            <person name="Murphy A."/>
            <person name="Rea P.A."/>
            <person name="Samuels L."/>
            <person name="Schulz B."/>
            <person name="Spalding E.J."/>
            <person name="Yazaki K."/>
            <person name="Theodoulou F.L."/>
        </authorList>
    </citation>
    <scope>GENE FAMILY</scope>
    <scope>NOMENCLATURE</scope>
</reference>
<reference key="13">
    <citation type="journal article" date="2009" name="J. Biol. Chem.">
        <title>The Arabidopsis ATP-binding cassette protein AtMRP5/AtABCC5 is a high affinity inositol hexakisphosphate transporter involved in guard cell signaling and phytate storage.</title>
        <authorList>
            <person name="Nagy R."/>
            <person name="Grob H."/>
            <person name="Weder B."/>
            <person name="Green P."/>
            <person name="Klein M."/>
            <person name="Frelet-Barrand A."/>
            <person name="Schjoerring J.K."/>
            <person name="Brearley C."/>
            <person name="Martinoia E."/>
        </authorList>
    </citation>
    <scope>FUNCTION</scope>
    <scope>DISRUPTION PHENOTYPE</scope>
</reference>
<comment type="function">
    <text evidence="4 5 7 8 9">Pump for glutathione S-conjugates. Involved in regulation of K(+) and Na(+) cell content. Mediates resistance to NaCl and Li(+), confers sensitivity to sulfonylurea drugs such as glibenclamide (inducer of stomatal opening), and required for stomatal opening regulation by auxin, abscisic acid (ABA) and external Ca(2+). Transports oestradiol-17-(beta-D-glucuronide) (E(2)17G). Involved in the root auxin content regulation that controls the transition from primary root elongation to lateral root formation. Plays a role in ABA-mediated germination inhibition (PubMed:11296221, PubMed:11855639, PubMed:12943546, PubMed:14684837). High-affinity inositol hexakisphosphate transporter that plays a role in guard cell signaling and phytic acid storage. Required for phytic acid accumulation in developing seeds. Phytic acid is the primary storage form of phosphorus in cereal grains and other plant seeds (PubMed:19797057).</text>
</comment>
<comment type="catalytic activity">
    <reaction>
        <text>ATP + H2O + xenobioticSide 1 = ADP + phosphate + xenobioticSide 2.</text>
        <dbReference type="EC" id="7.6.2.2"/>
    </reaction>
</comment>
<comment type="activity regulation">
    <text evidence="4">(E(2)17G) transport activity in negatively regulated by organic anions such as oestradiol-3-sulfate, luteolin-7-O-diglucuronide-4'-O-glucuronide, glycocholate, vanadate and the sulfonylurea glibenclamide, and, to a lower extent, by bafilomycin A1, NH(4)Cl, GSH, GSSG and DNB-GS.</text>
</comment>
<comment type="subcellular location">
    <subcellularLocation>
        <location evidence="3">Membrane</location>
        <topology evidence="3">Multi-pass membrane protein</topology>
    </subcellularLocation>
</comment>
<comment type="alternative products">
    <event type="alternative splicing"/>
    <isoform>
        <id>Q7GB25-1</id>
        <name>1</name>
        <sequence type="displayed"/>
    </isoform>
    <text>A number of isoforms are produced. According to EST sequences.</text>
</comment>
<comment type="tissue specificity">
    <text evidence="4 6 8">Ubiquitous, mostly in vascular tissues and epidermis, including guard cells.</text>
</comment>
<comment type="developmental stage">
    <text evidence="4">In flowers, present in anthers central vascular strand of the filament and in connecting tissues of the pollen sacs. Also present at the silique attachment site of the pedicel.</text>
</comment>
<comment type="disruption phenotype">
    <text evidence="7 9">Increased water use efficiency (PubMed:12943546). Low phytic acid levels in seed tissue (PubMed:19797057).</text>
</comment>
<comment type="similarity">
    <text evidence="10">Belongs to the ABC transporter superfamily. ABCC family. Conjugate transporter (TC 3.A.1.208) subfamily.</text>
</comment>
<comment type="sequence caution" evidence="10">
    <conflict type="erroneous gene model prediction">
        <sequence resource="EMBL-CDS" id="AAC16754"/>
    </conflict>
</comment>
<proteinExistence type="evidence at transcript level"/>
<evidence type="ECO:0000255" key="1"/>
<evidence type="ECO:0000255" key="2">
    <source>
        <dbReference type="PROSITE-ProRule" id="PRU00434"/>
    </source>
</evidence>
<evidence type="ECO:0000255" key="3">
    <source>
        <dbReference type="PROSITE-ProRule" id="PRU00441"/>
    </source>
</evidence>
<evidence type="ECO:0000269" key="4">
    <source>
    </source>
</evidence>
<evidence type="ECO:0000269" key="5">
    <source>
    </source>
</evidence>
<evidence type="ECO:0000269" key="6">
    <source>
    </source>
</evidence>
<evidence type="ECO:0000269" key="7">
    <source>
    </source>
</evidence>
<evidence type="ECO:0000269" key="8">
    <source>
    </source>
</evidence>
<evidence type="ECO:0000269" key="9">
    <source>
    </source>
</evidence>
<evidence type="ECO:0000305" key="10"/>
<feature type="chain" id="PRO_0000226076" description="ABC transporter C family member 5">
    <location>
        <begin position="1"/>
        <end position="1514"/>
    </location>
</feature>
<feature type="transmembrane region" description="Helical" evidence="3">
    <location>
        <begin position="16"/>
        <end position="36"/>
    </location>
</feature>
<feature type="transmembrane region" description="Helical" evidence="3">
    <location>
        <begin position="76"/>
        <end position="96"/>
    </location>
</feature>
<feature type="transmembrane region" description="Helical" evidence="3">
    <location>
        <begin position="111"/>
        <end position="131"/>
    </location>
</feature>
<feature type="transmembrane region" description="Helical" evidence="3">
    <location>
        <begin position="142"/>
        <end position="162"/>
    </location>
</feature>
<feature type="transmembrane region" description="Helical" evidence="3">
    <location>
        <begin position="177"/>
        <end position="197"/>
    </location>
</feature>
<feature type="transmembrane region" description="Helical" evidence="3">
    <location>
        <begin position="312"/>
        <end position="332"/>
    </location>
</feature>
<feature type="transmembrane region" description="Helical" evidence="3">
    <location>
        <begin position="334"/>
        <end position="354"/>
    </location>
</feature>
<feature type="transmembrane region" description="Helical" evidence="3">
    <location>
        <begin position="421"/>
        <end position="441"/>
    </location>
</feature>
<feature type="transmembrane region" description="Helical" evidence="3">
    <location>
        <begin position="446"/>
        <end position="466"/>
    </location>
</feature>
<feature type="transmembrane region" description="Helical" evidence="3">
    <location>
        <begin position="533"/>
        <end position="553"/>
    </location>
</feature>
<feature type="transmembrane region" description="Helical" evidence="3">
    <location>
        <begin position="946"/>
        <end position="966"/>
    </location>
</feature>
<feature type="transmembrane region" description="Helical" evidence="3">
    <location>
        <begin position="986"/>
        <end position="1006"/>
    </location>
</feature>
<feature type="transmembrane region" description="Helical" evidence="3">
    <location>
        <begin position="1078"/>
        <end position="1098"/>
    </location>
</feature>
<feature type="transmembrane region" description="Helical" evidence="3">
    <location>
        <begin position="1117"/>
        <end position="1137"/>
    </location>
</feature>
<feature type="transmembrane region" description="Helical" evidence="3">
    <location>
        <begin position="1155"/>
        <end position="1175"/>
    </location>
</feature>
<feature type="transmembrane region" description="Helical" evidence="3">
    <location>
        <begin position="1180"/>
        <end position="1200"/>
    </location>
</feature>
<feature type="domain" description="ABC transmembrane type-1 1" evidence="3">
    <location>
        <begin position="307"/>
        <end position="588"/>
    </location>
</feature>
<feature type="domain" description="ABC transporter 1" evidence="2">
    <location>
        <begin position="622"/>
        <end position="845"/>
    </location>
</feature>
<feature type="domain" description="ABC transmembrane type-1 2" evidence="3">
    <location>
        <begin position="949"/>
        <end position="1231"/>
    </location>
</feature>
<feature type="domain" description="ABC transporter 2" evidence="2">
    <location>
        <begin position="1268"/>
        <end position="1502"/>
    </location>
</feature>
<feature type="coiled-coil region" evidence="1">
    <location>
        <begin position="899"/>
        <end position="927"/>
    </location>
</feature>
<feature type="binding site" evidence="2">
    <location>
        <begin position="657"/>
        <end position="664"/>
    </location>
    <ligand>
        <name>ATP</name>
        <dbReference type="ChEBI" id="CHEBI:30616"/>
        <label>1</label>
    </ligand>
</feature>
<feature type="binding site" evidence="2">
    <location>
        <begin position="1302"/>
        <end position="1309"/>
    </location>
    <ligand>
        <name>ATP</name>
        <dbReference type="ChEBI" id="CHEBI:30616"/>
        <label>2</label>
    </ligand>
</feature>
<accession>Q7GB25</accession>
<accession>O65619</accession>
<accession>Q56ZX0</accession>
<sequence>MDFIEISLIFREHLPLLELCSVIINLLLFLVFLFAVSARQILVCVRRGRDRLSKDDTVSASNLSLEREVNHVSVGFGFNLSLLCCLYVLGVQVLVLVYDGVKVRREVSDWFVLCFPASQSLAWFVLSFLVLHLKYKSSEKLPFLVRIWWFLAFSICLCTMYVDGRRLAIEGWSRCSSHVVANLAVTPALGFLCFLAWRGVSGIQVTRSSSDLQEPLLVEEEAACLKVTPYSTAGLVSLITLSWLDPLLSAGSKRPLELKDIPLLAPRDRAKSSYKVLKSNWKRCKSENPSKPPSLARAIMKSFWKEAACNAVFAGLNTLVSYVGPYLISYFVDYLGGKEIFPHEGYVLAGIFFTSKLIETVTTRQWYMGVDILGMHVRSALTAMVYRKGLKLSSIAKQNHTSGEIVNYMAVDVQRIGDYSWYLHDIWMLPMQIVLALAILYKSVGIAAVATLVATIISILVTIPLAKVQEDYQDKLMTAKDERMRKTSECLRNMRVLKLQAWEDRYRVRLEEMREEEYGWLRKALYSQAFVTFIFWSSPIFVAAVTFATSIFLGTQLTAGGVLSALATFRILQEPLRNFPDLVSMMAQTKVSLDRISGFLQEEELQEDATVVIPRGLSNIAIEIKDGVFCWDPFSSRPTLSGIQMKVEKGMRVAVCGTVGSGKSSFISCILGEIPKISGEVRICGTTGYVSQSAWIQSGNIEENILFGSPMEKTKYKNVIQACSLKKDIELFSHGDQTIIGERGINLSGGQKQRVQLARALYQDADIYLLDDPFSALDAHTGSDLFRDYILSALAEKTVVFVTHQVEFLPAADLILVLKEGRIIQSGKYDDLLQAGTDFKALVSAHHEAIEAMDIPSPSSEDSDENPIRDSLVLHNPKSDVFENDIETLAKEVQEGGSASDLKAIKEKKKKAKRSRKKQLVQEEERVKGKVSMKVYLSYMGAAYKGALIPLIILAQAAFQFLQIASNWWMAWANPQTEGDESKVDPTLLLIVYTALAFGSSVFIFVRAALVATFGLAAAQKLFLNMLRSVFRAPMSFFDSTPAGRILNRVSIDQSVVDLDIPFRLGGFASTTIQLCGIVAVMTNVTWQVFLLVVPVAVACFWMQKYYMASSRELVRIVSIQKSPIIHLFGESIAGAATIRGFGQEKRFIKRNLYLLDCFVRPFFCSIAAIEWLCLRMELLSTLVFAFCMVLLVSFPHGTIDPSMAGLAVTYGLNLNGRLSRWILSFCKLENKIISIERIYQYSQIVGEAPAIIEDFRPPSSWPATGTIELVDVKVRYAENLPTVLHGVSCVFPGGKKIGIVGRTGSGKSTLIQALFRLIEPTAGKITIDNIDISQIGLHDLRSRLGIIPQDPTLFEGTIRANLDPLEEHSDDKIWEALDKSQLGDVVRGKDLKLDSPVLENGDNWSVGQRQLVSLGRALLKQAKILVLDEATASVDTATDNLIQKIIRTEFEDCTVCTIAHRIPTVIDSDLVLVLSDGRVAEFDTPARLLEDKSSMFLKLVTEYSSRSTGIPEL</sequence>
<dbReference type="EC" id="7.6.2.2"/>
<dbReference type="EMBL" id="Y11250">
    <property type="protein sequence ID" value="CAA72120.1"/>
    <property type="molecule type" value="mRNA"/>
</dbReference>
<dbReference type="EMBL" id="AF225908">
    <property type="protein sequence ID" value="AAG14965.1"/>
    <property type="molecule type" value="mRNA"/>
</dbReference>
<dbReference type="EMBL" id="AC002411">
    <property type="protein sequence ID" value="AAC16754.1"/>
    <property type="status" value="ALT_SEQ"/>
    <property type="molecule type" value="Genomic_DNA"/>
</dbReference>
<dbReference type="EMBL" id="CP002684">
    <property type="protein sequence ID" value="AEE27658.1"/>
    <property type="molecule type" value="Genomic_DNA"/>
</dbReference>
<dbReference type="EMBL" id="AK220840">
    <property type="protein sequence ID" value="BAD94167.1"/>
    <property type="molecule type" value="mRNA"/>
</dbReference>
<dbReference type="PIR" id="T00961">
    <property type="entry name" value="T00961"/>
</dbReference>
<dbReference type="PIR" id="T52080">
    <property type="entry name" value="T52080"/>
</dbReference>
<dbReference type="RefSeq" id="NP_171908.1">
    <molecule id="Q7GB25-1"/>
    <property type="nucleotide sequence ID" value="NM_100293.3"/>
</dbReference>
<dbReference type="SMR" id="Q7GB25"/>
<dbReference type="BioGRID" id="24512">
    <property type="interactions" value="7"/>
</dbReference>
<dbReference type="FunCoup" id="Q7GB25">
    <property type="interactions" value="399"/>
</dbReference>
<dbReference type="IntAct" id="Q7GB25">
    <property type="interactions" value="7"/>
</dbReference>
<dbReference type="STRING" id="3702.Q7GB25"/>
<dbReference type="TCDB" id="3.A.1.208.21">
    <property type="family name" value="the atp-binding cassette (abc) superfamily"/>
</dbReference>
<dbReference type="GlyGen" id="Q7GB25">
    <property type="glycosylation" value="2 sites"/>
</dbReference>
<dbReference type="iPTMnet" id="Q7GB25"/>
<dbReference type="PaxDb" id="3702-AT1G04120.1"/>
<dbReference type="ProteomicsDB" id="245093">
    <molecule id="Q7GB25-1"/>
</dbReference>
<dbReference type="EnsemblPlants" id="AT1G04120.1">
    <molecule id="Q7GB25-1"/>
    <property type="protein sequence ID" value="AT1G04120.1"/>
    <property type="gene ID" value="AT1G04120"/>
</dbReference>
<dbReference type="GeneID" id="839277"/>
<dbReference type="Gramene" id="AT1G04120.1">
    <molecule id="Q7GB25-1"/>
    <property type="protein sequence ID" value="AT1G04120.1"/>
    <property type="gene ID" value="AT1G04120"/>
</dbReference>
<dbReference type="KEGG" id="ath:AT1G04120"/>
<dbReference type="Araport" id="AT1G04120"/>
<dbReference type="TAIR" id="AT1G04120">
    <property type="gene designation" value="ABCC5"/>
</dbReference>
<dbReference type="eggNOG" id="KOG0054">
    <property type="taxonomic scope" value="Eukaryota"/>
</dbReference>
<dbReference type="HOGENOM" id="CLU_000604_27_3_1"/>
<dbReference type="InParanoid" id="Q7GB25"/>
<dbReference type="OrthoDB" id="6500128at2759"/>
<dbReference type="PhylomeDB" id="Q7GB25"/>
<dbReference type="BioCyc" id="ARA:AT1G04120-MONOMER"/>
<dbReference type="PRO" id="PR:Q7GB25"/>
<dbReference type="Proteomes" id="UP000006548">
    <property type="component" value="Chromosome 1"/>
</dbReference>
<dbReference type="ExpressionAtlas" id="Q7GB25">
    <property type="expression patterns" value="baseline and differential"/>
</dbReference>
<dbReference type="GO" id="GO:0000325">
    <property type="term" value="C:plant-type vacuole"/>
    <property type="evidence" value="ECO:0007005"/>
    <property type="project" value="TAIR"/>
</dbReference>
<dbReference type="GO" id="GO:0005774">
    <property type="term" value="C:vacuolar membrane"/>
    <property type="evidence" value="ECO:0007005"/>
    <property type="project" value="TAIR"/>
</dbReference>
<dbReference type="GO" id="GO:0005773">
    <property type="term" value="C:vacuole"/>
    <property type="evidence" value="ECO:0007005"/>
    <property type="project" value="TAIR"/>
</dbReference>
<dbReference type="GO" id="GO:0008559">
    <property type="term" value="F:ABC-type xenobiotic transporter activity"/>
    <property type="evidence" value="ECO:0007669"/>
    <property type="project" value="UniProtKB-EC"/>
</dbReference>
<dbReference type="GO" id="GO:0005524">
    <property type="term" value="F:ATP binding"/>
    <property type="evidence" value="ECO:0007669"/>
    <property type="project" value="UniProtKB-KW"/>
</dbReference>
<dbReference type="GO" id="GO:0016887">
    <property type="term" value="F:ATP hydrolysis activity"/>
    <property type="evidence" value="ECO:0007669"/>
    <property type="project" value="InterPro"/>
</dbReference>
<dbReference type="GO" id="GO:0042626">
    <property type="term" value="F:ATPase-coupled transmembrane transporter activity"/>
    <property type="evidence" value="ECO:0000250"/>
    <property type="project" value="TAIR"/>
</dbReference>
<dbReference type="GO" id="GO:0008281">
    <property type="term" value="F:sulfonylurea receptor activity"/>
    <property type="evidence" value="ECO:0000314"/>
    <property type="project" value="TAIR"/>
</dbReference>
<dbReference type="GO" id="GO:1901527">
    <property type="term" value="P:abscisic acid-activated signaling pathway involved in stomatal movement"/>
    <property type="evidence" value="ECO:0000315"/>
    <property type="project" value="TAIR"/>
</dbReference>
<dbReference type="GO" id="GO:0030007">
    <property type="term" value="P:intracellular potassium ion homeostasis"/>
    <property type="evidence" value="ECO:0000315"/>
    <property type="project" value="TAIR"/>
</dbReference>
<dbReference type="GO" id="GO:0009651">
    <property type="term" value="P:response to salt stress"/>
    <property type="evidence" value="ECO:0000315"/>
    <property type="project" value="TAIR"/>
</dbReference>
<dbReference type="CDD" id="cd18579">
    <property type="entry name" value="ABC_6TM_ABCC_D1"/>
    <property type="match status" value="1"/>
</dbReference>
<dbReference type="CDD" id="cd18580">
    <property type="entry name" value="ABC_6TM_ABCC_D2"/>
    <property type="match status" value="1"/>
</dbReference>
<dbReference type="CDD" id="cd03250">
    <property type="entry name" value="ABCC_MRP_domain1"/>
    <property type="match status" value="1"/>
</dbReference>
<dbReference type="CDD" id="cd03244">
    <property type="entry name" value="ABCC_MRP_domain2"/>
    <property type="match status" value="1"/>
</dbReference>
<dbReference type="FunFam" id="1.20.1560.10:FF:000003">
    <property type="entry name" value="ABC transporter C family member 10"/>
    <property type="match status" value="1"/>
</dbReference>
<dbReference type="FunFam" id="3.40.50.300:FF:000169">
    <property type="entry name" value="ABC transporter C family member 3"/>
    <property type="match status" value="1"/>
</dbReference>
<dbReference type="FunFam" id="1.20.1560.10:FF:000002">
    <property type="entry name" value="ABC transporter C family member 5"/>
    <property type="match status" value="1"/>
</dbReference>
<dbReference type="FunFam" id="3.40.50.300:FF:000508">
    <property type="entry name" value="ABC transporter C family member 5"/>
    <property type="match status" value="1"/>
</dbReference>
<dbReference type="Gene3D" id="1.20.1560.10">
    <property type="entry name" value="ABC transporter type 1, transmembrane domain"/>
    <property type="match status" value="2"/>
</dbReference>
<dbReference type="Gene3D" id="3.40.50.300">
    <property type="entry name" value="P-loop containing nucleotide triphosphate hydrolases"/>
    <property type="match status" value="2"/>
</dbReference>
<dbReference type="InterPro" id="IPR003593">
    <property type="entry name" value="AAA+_ATPase"/>
</dbReference>
<dbReference type="InterPro" id="IPR011527">
    <property type="entry name" value="ABC1_TM_dom"/>
</dbReference>
<dbReference type="InterPro" id="IPR036640">
    <property type="entry name" value="ABC1_TM_sf"/>
</dbReference>
<dbReference type="InterPro" id="IPR003439">
    <property type="entry name" value="ABC_transporter-like_ATP-bd"/>
</dbReference>
<dbReference type="InterPro" id="IPR017871">
    <property type="entry name" value="ABC_transporter-like_CS"/>
</dbReference>
<dbReference type="InterPro" id="IPR050173">
    <property type="entry name" value="ABC_transporter_C-like"/>
</dbReference>
<dbReference type="InterPro" id="IPR044746">
    <property type="entry name" value="ABCC_6TM_D1"/>
</dbReference>
<dbReference type="InterPro" id="IPR044726">
    <property type="entry name" value="ABCC_6TM_D2"/>
</dbReference>
<dbReference type="InterPro" id="IPR027417">
    <property type="entry name" value="P-loop_NTPase"/>
</dbReference>
<dbReference type="PANTHER" id="PTHR24223:SF189">
    <property type="entry name" value="ABC TRANSPORTER C FAMILY MEMBER 5"/>
    <property type="match status" value="1"/>
</dbReference>
<dbReference type="PANTHER" id="PTHR24223">
    <property type="entry name" value="ATP-BINDING CASSETTE SUB-FAMILY C"/>
    <property type="match status" value="1"/>
</dbReference>
<dbReference type="Pfam" id="PF00664">
    <property type="entry name" value="ABC_membrane"/>
    <property type="match status" value="2"/>
</dbReference>
<dbReference type="Pfam" id="PF00005">
    <property type="entry name" value="ABC_tran"/>
    <property type="match status" value="2"/>
</dbReference>
<dbReference type="SMART" id="SM00382">
    <property type="entry name" value="AAA"/>
    <property type="match status" value="2"/>
</dbReference>
<dbReference type="SUPFAM" id="SSF90123">
    <property type="entry name" value="ABC transporter transmembrane region"/>
    <property type="match status" value="2"/>
</dbReference>
<dbReference type="SUPFAM" id="SSF52540">
    <property type="entry name" value="P-loop containing nucleoside triphosphate hydrolases"/>
    <property type="match status" value="2"/>
</dbReference>
<dbReference type="PROSITE" id="PS50929">
    <property type="entry name" value="ABC_TM1F"/>
    <property type="match status" value="2"/>
</dbReference>
<dbReference type="PROSITE" id="PS00211">
    <property type="entry name" value="ABC_TRANSPORTER_1"/>
    <property type="match status" value="1"/>
</dbReference>
<dbReference type="PROSITE" id="PS50893">
    <property type="entry name" value="ABC_TRANSPORTER_2"/>
    <property type="match status" value="2"/>
</dbReference>
<name>AB5C_ARATH</name>
<protein>
    <recommendedName>
        <fullName>ABC transporter C family member 5</fullName>
        <shortName>ABC transporter ABCC.5</shortName>
        <shortName>AtABCC5</shortName>
        <ecNumber>7.6.2.2</ecNumber>
    </recommendedName>
    <alternativeName>
        <fullName>ATP-energized glutathione S-conjugate pump 5</fullName>
    </alternativeName>
    <alternativeName>
        <fullName>Glutathione S-conjugate-transporting ATPase 5</fullName>
    </alternativeName>
    <alternativeName>
        <fullName>Multidrug resistance-associated protein 5</fullName>
    </alternativeName>
</protein>